<protein>
    <recommendedName>
        <fullName evidence="1">Urease accessory protein UreG</fullName>
    </recommendedName>
</protein>
<reference key="1">
    <citation type="journal article" date="1996" name="J. Bacteriol.">
        <title>Organization of Ureaplasma urealyticum urease gene cluster and expression in a suppressor strain of Escherichia coli.</title>
        <authorList>
            <person name="Neyrolles O."/>
            <person name="Ferris S."/>
            <person name="Behbahani N."/>
            <person name="Montagnier L."/>
            <person name="Blanchard A."/>
        </authorList>
    </citation>
    <scope>NUCLEOTIDE SEQUENCE [GENOMIC DNA]</scope>
    <source>
        <strain>ATCC 27813 / 7 / Serovar 1</strain>
    </source>
</reference>
<reference key="2">
    <citation type="journal article" date="2000" name="Nature">
        <title>The complete sequence of the mucosal pathogen Ureaplasma urealyticum.</title>
        <authorList>
            <person name="Glass J.I."/>
            <person name="Lefkowitz E.J."/>
            <person name="Glass J.S."/>
            <person name="Heiner C.R."/>
            <person name="Chen E.Y."/>
            <person name="Cassell G.H."/>
        </authorList>
    </citation>
    <scope>NUCLEOTIDE SEQUENCE [LARGE SCALE GENOMIC DNA]</scope>
    <source>
        <strain>ATCC 700970</strain>
    </source>
</reference>
<dbReference type="EMBL" id="L40489">
    <property type="protein sequence ID" value="AAA89192.2"/>
    <property type="molecule type" value="Genomic_DNA"/>
</dbReference>
<dbReference type="EMBL" id="AF222894">
    <property type="protein sequence ID" value="AAF30841.1"/>
    <property type="molecule type" value="Genomic_DNA"/>
</dbReference>
<dbReference type="PIR" id="G82893">
    <property type="entry name" value="G82893"/>
</dbReference>
<dbReference type="RefSeq" id="WP_006688745.1">
    <property type="nucleotide sequence ID" value="NC_002162.1"/>
</dbReference>
<dbReference type="SMR" id="Q56561"/>
<dbReference type="STRING" id="273119.UU429"/>
<dbReference type="EnsemblBacteria" id="AAF30841">
    <property type="protein sequence ID" value="AAF30841"/>
    <property type="gene ID" value="UU429"/>
</dbReference>
<dbReference type="GeneID" id="29672328"/>
<dbReference type="KEGG" id="uur:UU429"/>
<dbReference type="eggNOG" id="COG0378">
    <property type="taxonomic scope" value="Bacteria"/>
</dbReference>
<dbReference type="HOGENOM" id="CLU_072144_1_0_14"/>
<dbReference type="OrthoDB" id="9802035at2"/>
<dbReference type="Proteomes" id="UP000000423">
    <property type="component" value="Chromosome"/>
</dbReference>
<dbReference type="GO" id="GO:0005737">
    <property type="term" value="C:cytoplasm"/>
    <property type="evidence" value="ECO:0007669"/>
    <property type="project" value="UniProtKB-SubCell"/>
</dbReference>
<dbReference type="GO" id="GO:0005525">
    <property type="term" value="F:GTP binding"/>
    <property type="evidence" value="ECO:0007669"/>
    <property type="project" value="UniProtKB-KW"/>
</dbReference>
<dbReference type="GO" id="GO:0003924">
    <property type="term" value="F:GTPase activity"/>
    <property type="evidence" value="ECO:0007669"/>
    <property type="project" value="InterPro"/>
</dbReference>
<dbReference type="GO" id="GO:0016151">
    <property type="term" value="F:nickel cation binding"/>
    <property type="evidence" value="ECO:0007669"/>
    <property type="project" value="InterPro"/>
</dbReference>
<dbReference type="GO" id="GO:0043419">
    <property type="term" value="P:urea catabolic process"/>
    <property type="evidence" value="ECO:0007669"/>
    <property type="project" value="InterPro"/>
</dbReference>
<dbReference type="CDD" id="cd05540">
    <property type="entry name" value="UreG"/>
    <property type="match status" value="1"/>
</dbReference>
<dbReference type="Gene3D" id="3.40.50.300">
    <property type="entry name" value="P-loop containing nucleotide triphosphate hydrolases"/>
    <property type="match status" value="1"/>
</dbReference>
<dbReference type="HAMAP" id="MF_01389">
    <property type="entry name" value="UreG"/>
    <property type="match status" value="1"/>
</dbReference>
<dbReference type="InterPro" id="IPR003495">
    <property type="entry name" value="CobW/HypB/UreG_nucleotide-bd"/>
</dbReference>
<dbReference type="InterPro" id="IPR027417">
    <property type="entry name" value="P-loop_NTPase"/>
</dbReference>
<dbReference type="InterPro" id="IPR004400">
    <property type="entry name" value="UreG"/>
</dbReference>
<dbReference type="NCBIfam" id="TIGR00101">
    <property type="entry name" value="ureG"/>
    <property type="match status" value="1"/>
</dbReference>
<dbReference type="PANTHER" id="PTHR31715">
    <property type="entry name" value="UREASE ACCESSORY PROTEIN G"/>
    <property type="match status" value="1"/>
</dbReference>
<dbReference type="PANTHER" id="PTHR31715:SF0">
    <property type="entry name" value="UREASE ACCESSORY PROTEIN G"/>
    <property type="match status" value="1"/>
</dbReference>
<dbReference type="Pfam" id="PF02492">
    <property type="entry name" value="cobW"/>
    <property type="match status" value="1"/>
</dbReference>
<dbReference type="PIRSF" id="PIRSF005624">
    <property type="entry name" value="Ni-bind_GTPase"/>
    <property type="match status" value="1"/>
</dbReference>
<dbReference type="SUPFAM" id="SSF52540">
    <property type="entry name" value="P-loop containing nucleoside triphosphate hydrolases"/>
    <property type="match status" value="1"/>
</dbReference>
<keyword id="KW-0143">Chaperone</keyword>
<keyword id="KW-0963">Cytoplasm</keyword>
<keyword id="KW-0342">GTP-binding</keyword>
<keyword id="KW-0996">Nickel insertion</keyword>
<keyword id="KW-0547">Nucleotide-binding</keyword>
<keyword id="KW-1185">Reference proteome</keyword>
<feature type="chain" id="PRO_0000067675" description="Urease accessory protein UreG">
    <location>
        <begin position="1"/>
        <end position="206"/>
    </location>
</feature>
<feature type="binding site" evidence="1">
    <location>
        <begin position="11"/>
        <end position="18"/>
    </location>
    <ligand>
        <name>GTP</name>
        <dbReference type="ChEBI" id="CHEBI:37565"/>
    </ligand>
</feature>
<name>UREG_UREPA</name>
<sequence length="206" mass="22509">MKRPLIIGVGGPVGAGKTMLIERLTRYLSTKGYSMAAITNDIYTKEDARILLNTSVLPADRIAGVETGGCPHTAIREDASMNFAAIEEMCDKHPDLQLLFLESGGDNLSATFSPDLVDFSIYIIDVAQGEKIPRKGGQGMIKSDLFIINKVDLAPYVGANVEVMKADTLKSRGNKDFFVTNLKTDEGLKSVADWIEKRLQLALLEE</sequence>
<proteinExistence type="inferred from homology"/>
<comment type="function">
    <text evidence="1">Facilitates the functional incorporation of the urease nickel metallocenter. This process requires GTP hydrolysis, probably effectuated by UreG.</text>
</comment>
<comment type="subunit">
    <text evidence="1">Homodimer. UreD, UreF and UreG form a complex that acts as a GTP-hydrolysis-dependent molecular chaperone, activating the urease apoprotein by helping to assemble the nickel containing metallocenter of UreC. The UreE protein probably delivers the nickel.</text>
</comment>
<comment type="subcellular location">
    <subcellularLocation>
        <location evidence="1">Cytoplasm</location>
    </subcellularLocation>
</comment>
<comment type="similarity">
    <text evidence="1">Belongs to the SIMIBI class G3E GTPase family. UreG subfamily.</text>
</comment>
<accession>Q56561</accession>
<evidence type="ECO:0000255" key="1">
    <source>
        <dbReference type="HAMAP-Rule" id="MF_01389"/>
    </source>
</evidence>
<gene>
    <name evidence="1" type="primary">ureG</name>
    <name type="ordered locus">UU429</name>
</gene>
<organism>
    <name type="scientific">Ureaplasma parvum serovar 3 (strain ATCC 700970)</name>
    <dbReference type="NCBI Taxonomy" id="273119"/>
    <lineage>
        <taxon>Bacteria</taxon>
        <taxon>Bacillati</taxon>
        <taxon>Mycoplasmatota</taxon>
        <taxon>Mycoplasmoidales</taxon>
        <taxon>Mycoplasmoidaceae</taxon>
        <taxon>Ureaplasma</taxon>
    </lineage>
</organism>